<organism>
    <name type="scientific">Saccharopolyspora erythraea (strain ATCC 11635 / DSM 40517 / JCM 4748 / NBRC 13426 / NCIMB 8594 / NRRL 2338)</name>
    <dbReference type="NCBI Taxonomy" id="405948"/>
    <lineage>
        <taxon>Bacteria</taxon>
        <taxon>Bacillati</taxon>
        <taxon>Actinomycetota</taxon>
        <taxon>Actinomycetes</taxon>
        <taxon>Pseudonocardiales</taxon>
        <taxon>Pseudonocardiaceae</taxon>
        <taxon>Saccharopolyspora</taxon>
    </lineage>
</organism>
<protein>
    <recommendedName>
        <fullName evidence="1">Indole-3-glycerol phosphate synthase</fullName>
        <shortName evidence="1">IGPS</shortName>
        <ecNumber evidence="1">4.1.1.48</ecNumber>
    </recommendedName>
</protein>
<keyword id="KW-0028">Amino-acid biosynthesis</keyword>
<keyword id="KW-0057">Aromatic amino acid biosynthesis</keyword>
<keyword id="KW-0210">Decarboxylase</keyword>
<keyword id="KW-0456">Lyase</keyword>
<keyword id="KW-1185">Reference proteome</keyword>
<keyword id="KW-0822">Tryptophan biosynthesis</keyword>
<proteinExistence type="inferred from homology"/>
<name>TRPC_SACEN</name>
<comment type="catalytic activity">
    <reaction evidence="1">
        <text>1-(2-carboxyphenylamino)-1-deoxy-D-ribulose 5-phosphate + H(+) = (1S,2R)-1-C-(indol-3-yl)glycerol 3-phosphate + CO2 + H2O</text>
        <dbReference type="Rhea" id="RHEA:23476"/>
        <dbReference type="ChEBI" id="CHEBI:15377"/>
        <dbReference type="ChEBI" id="CHEBI:15378"/>
        <dbReference type="ChEBI" id="CHEBI:16526"/>
        <dbReference type="ChEBI" id="CHEBI:58613"/>
        <dbReference type="ChEBI" id="CHEBI:58866"/>
        <dbReference type="EC" id="4.1.1.48"/>
    </reaction>
</comment>
<comment type="pathway">
    <text evidence="1">Amino-acid biosynthesis; L-tryptophan biosynthesis; L-tryptophan from chorismate: step 4/5.</text>
</comment>
<comment type="similarity">
    <text evidence="1">Belongs to the TrpC family.</text>
</comment>
<sequence length="269" mass="28239">MSVLESIIDGVREDLAVRESTIPFDEIKQRSAAAPPPRDVMAALHAPGVGVIAEVKRRSPSKGELADIAEPAELAADYAAAGARVISVLTEQRRFGGSLADFDAVRAKVSAPLLRKDFIVSPYQVHEARAHGADMVLLIVAALEQVALEALLDRVESLGMTALVEVHTAEEADRALEAGAKVIGINARNLHTLEVDRDVFGRIAPGLPVEVLKVAESGVRGPSDLMAYAGSGADAVLVGEGLVTSDNPRTAVTQLVTAGSHPACPRPSR</sequence>
<evidence type="ECO:0000255" key="1">
    <source>
        <dbReference type="HAMAP-Rule" id="MF_00134"/>
    </source>
</evidence>
<gene>
    <name evidence="1" type="primary">trpC</name>
    <name type="ordered locus">SACE_5750</name>
</gene>
<reference key="1">
    <citation type="journal article" date="2007" name="Nat. Biotechnol.">
        <title>Complete genome sequence of the erythromycin-producing bacterium Saccharopolyspora erythraea NRRL23338.</title>
        <authorList>
            <person name="Oliynyk M."/>
            <person name="Samborskyy M."/>
            <person name="Lester J.B."/>
            <person name="Mironenko T."/>
            <person name="Scott N."/>
            <person name="Dickens S."/>
            <person name="Haydock S.F."/>
            <person name="Leadlay P.F."/>
        </authorList>
    </citation>
    <scope>NUCLEOTIDE SEQUENCE [LARGE SCALE GENOMIC DNA]</scope>
    <source>
        <strain>ATCC 11635 / DSM 40517 / JCM 4748 / NBRC 13426 / NCIMB 8594 / NRRL 2338</strain>
    </source>
</reference>
<dbReference type="EC" id="4.1.1.48" evidence="1"/>
<dbReference type="EMBL" id="AM420293">
    <property type="protein sequence ID" value="CAM04935.1"/>
    <property type="molecule type" value="Genomic_DNA"/>
</dbReference>
<dbReference type="RefSeq" id="WP_009948075.1">
    <property type="nucleotide sequence ID" value="NC_009142.1"/>
</dbReference>
<dbReference type="SMR" id="A4FLL0"/>
<dbReference type="STRING" id="405948.SACE_5750"/>
<dbReference type="KEGG" id="sen:SACE_5750"/>
<dbReference type="eggNOG" id="COG0134">
    <property type="taxonomic scope" value="Bacteria"/>
</dbReference>
<dbReference type="HOGENOM" id="CLU_034247_0_0_11"/>
<dbReference type="OrthoDB" id="9804217at2"/>
<dbReference type="UniPathway" id="UPA00035">
    <property type="reaction ID" value="UER00043"/>
</dbReference>
<dbReference type="Proteomes" id="UP000006728">
    <property type="component" value="Chromosome"/>
</dbReference>
<dbReference type="GO" id="GO:0004425">
    <property type="term" value="F:indole-3-glycerol-phosphate synthase activity"/>
    <property type="evidence" value="ECO:0007669"/>
    <property type="project" value="UniProtKB-UniRule"/>
</dbReference>
<dbReference type="GO" id="GO:0004640">
    <property type="term" value="F:phosphoribosylanthranilate isomerase activity"/>
    <property type="evidence" value="ECO:0007669"/>
    <property type="project" value="TreeGrafter"/>
</dbReference>
<dbReference type="GO" id="GO:0000162">
    <property type="term" value="P:L-tryptophan biosynthetic process"/>
    <property type="evidence" value="ECO:0007669"/>
    <property type="project" value="UniProtKB-UniRule"/>
</dbReference>
<dbReference type="CDD" id="cd00331">
    <property type="entry name" value="IGPS"/>
    <property type="match status" value="1"/>
</dbReference>
<dbReference type="FunFam" id="3.20.20.70:FF:000024">
    <property type="entry name" value="Indole-3-glycerol phosphate synthase"/>
    <property type="match status" value="1"/>
</dbReference>
<dbReference type="Gene3D" id="3.20.20.70">
    <property type="entry name" value="Aldolase class I"/>
    <property type="match status" value="1"/>
</dbReference>
<dbReference type="HAMAP" id="MF_00134_B">
    <property type="entry name" value="IGPS_B"/>
    <property type="match status" value="1"/>
</dbReference>
<dbReference type="InterPro" id="IPR013785">
    <property type="entry name" value="Aldolase_TIM"/>
</dbReference>
<dbReference type="InterPro" id="IPR045186">
    <property type="entry name" value="Indole-3-glycerol_P_synth"/>
</dbReference>
<dbReference type="InterPro" id="IPR013798">
    <property type="entry name" value="Indole-3-glycerol_P_synth_dom"/>
</dbReference>
<dbReference type="InterPro" id="IPR001468">
    <property type="entry name" value="Indole-3-GlycerolPSynthase_CS"/>
</dbReference>
<dbReference type="InterPro" id="IPR011060">
    <property type="entry name" value="RibuloseP-bd_barrel"/>
</dbReference>
<dbReference type="NCBIfam" id="NF001369">
    <property type="entry name" value="PRK00278.1-1"/>
    <property type="match status" value="1"/>
</dbReference>
<dbReference type="NCBIfam" id="NF001377">
    <property type="entry name" value="PRK00278.2-4"/>
    <property type="match status" value="1"/>
</dbReference>
<dbReference type="PANTHER" id="PTHR22854:SF2">
    <property type="entry name" value="INDOLE-3-GLYCEROL-PHOSPHATE SYNTHASE"/>
    <property type="match status" value="1"/>
</dbReference>
<dbReference type="PANTHER" id="PTHR22854">
    <property type="entry name" value="TRYPTOPHAN BIOSYNTHESIS PROTEIN"/>
    <property type="match status" value="1"/>
</dbReference>
<dbReference type="Pfam" id="PF00218">
    <property type="entry name" value="IGPS"/>
    <property type="match status" value="1"/>
</dbReference>
<dbReference type="SUPFAM" id="SSF51366">
    <property type="entry name" value="Ribulose-phoshate binding barrel"/>
    <property type="match status" value="1"/>
</dbReference>
<dbReference type="PROSITE" id="PS00614">
    <property type="entry name" value="IGPS"/>
    <property type="match status" value="1"/>
</dbReference>
<accession>A4FLL0</accession>
<feature type="chain" id="PRO_1000018551" description="Indole-3-glycerol phosphate synthase">
    <location>
        <begin position="1"/>
        <end position="269"/>
    </location>
</feature>